<keyword id="KW-0966">Cell projection</keyword>
<keyword id="KW-0969">Cilium</keyword>
<keyword id="KW-0175">Coiled coil</keyword>
<keyword id="KW-0963">Cytoplasm</keyword>
<keyword id="KW-0968">Cytoplasmic vesicle</keyword>
<keyword id="KW-0282">Flagellum</keyword>
<keyword id="KW-1185">Reference proteome</keyword>
<accession>B0BMZ6</accession>
<accession>A0A0H5BIB4</accession>
<accession>F1LNM9</accession>
<feature type="chain" id="PRO_0000454662" description="Cilia- and flagella-associated protein 119">
    <location>
        <begin position="1"/>
        <end position="332"/>
    </location>
</feature>
<feature type="region of interest" description="Disordered" evidence="2">
    <location>
        <begin position="1"/>
        <end position="70"/>
    </location>
</feature>
<feature type="region of interest" description="Disordered" evidence="2">
    <location>
        <begin position="246"/>
        <end position="271"/>
    </location>
</feature>
<feature type="region of interest" description="Disordered" evidence="2">
    <location>
        <begin position="308"/>
        <end position="332"/>
    </location>
</feature>
<feature type="coiled-coil region" evidence="1">
    <location>
        <begin position="287"/>
        <end position="308"/>
    </location>
</feature>
<feature type="compositionally biased region" description="Polar residues" evidence="2">
    <location>
        <begin position="1"/>
        <end position="10"/>
    </location>
</feature>
<feature type="compositionally biased region" description="Basic and acidic residues" evidence="2">
    <location>
        <begin position="14"/>
        <end position="30"/>
    </location>
</feature>
<feature type="compositionally biased region" description="Polar residues" evidence="2">
    <location>
        <begin position="49"/>
        <end position="58"/>
    </location>
</feature>
<proteinExistence type="evidence at protein level"/>
<protein>
    <recommendedName>
        <fullName evidence="7">Cilia- and flagella-associated protein 119</fullName>
    </recommendedName>
    <alternativeName>
        <fullName evidence="8">Coiled-coil domain-containing protein 189</fullName>
    </alternativeName>
    <alternativeName>
        <fullName evidence="5">Spergen-4</fullName>
    </alternativeName>
</protein>
<organism>
    <name type="scientific">Rattus norvegicus</name>
    <name type="common">Rat</name>
    <dbReference type="NCBI Taxonomy" id="10116"/>
    <lineage>
        <taxon>Eukaryota</taxon>
        <taxon>Metazoa</taxon>
        <taxon>Chordata</taxon>
        <taxon>Craniata</taxon>
        <taxon>Vertebrata</taxon>
        <taxon>Euteleostomi</taxon>
        <taxon>Mammalia</taxon>
        <taxon>Eutheria</taxon>
        <taxon>Euarchontoglires</taxon>
        <taxon>Glires</taxon>
        <taxon>Rodentia</taxon>
        <taxon>Myomorpha</taxon>
        <taxon>Muroidea</taxon>
        <taxon>Muridae</taxon>
        <taxon>Murinae</taxon>
        <taxon>Rattus</taxon>
    </lineage>
</organism>
<evidence type="ECO:0000255" key="1"/>
<evidence type="ECO:0000256" key="2">
    <source>
        <dbReference type="SAM" id="MobiDB-lite"/>
    </source>
</evidence>
<evidence type="ECO:0000269" key="3">
    <source>
    </source>
</evidence>
<evidence type="ECO:0000269" key="4">
    <source>
    </source>
</evidence>
<evidence type="ECO:0000303" key="5">
    <source>
    </source>
</evidence>
<evidence type="ECO:0000305" key="6"/>
<evidence type="ECO:0000305" key="7">
    <source>
    </source>
</evidence>
<evidence type="ECO:0000312" key="8">
    <source>
        <dbReference type="RGD" id="1593368"/>
    </source>
</evidence>
<dbReference type="EMBL" id="LC063347">
    <property type="protein sequence ID" value="BAR94674.1"/>
    <property type="status" value="ALT_INIT"/>
    <property type="molecule type" value="mRNA"/>
</dbReference>
<dbReference type="EMBL" id="AC120262">
    <property type="status" value="NOT_ANNOTATED_CDS"/>
    <property type="molecule type" value="Genomic_DNA"/>
</dbReference>
<dbReference type="EMBL" id="CH473956">
    <property type="protein sequence ID" value="EDM17260.1"/>
    <property type="molecule type" value="Genomic_DNA"/>
</dbReference>
<dbReference type="EMBL" id="BC158625">
    <property type="protein sequence ID" value="AAI58626.1"/>
    <property type="molecule type" value="mRNA"/>
</dbReference>
<dbReference type="RefSeq" id="NP_001128166.2">
    <property type="nucleotide sequence ID" value="NM_001134694.2"/>
</dbReference>
<dbReference type="SMR" id="B0BMZ6"/>
<dbReference type="FunCoup" id="B0BMZ6">
    <property type="interactions" value="128"/>
</dbReference>
<dbReference type="STRING" id="10116.ENSRNOP00000070647"/>
<dbReference type="iPTMnet" id="B0BMZ6"/>
<dbReference type="PhosphoSitePlus" id="B0BMZ6"/>
<dbReference type="PaxDb" id="10116-ENSRNOP00000043649"/>
<dbReference type="GeneID" id="691909"/>
<dbReference type="KEGG" id="rno:691909"/>
<dbReference type="UCSC" id="RGD:1593368">
    <property type="organism name" value="rat"/>
</dbReference>
<dbReference type="AGR" id="RGD:1593368"/>
<dbReference type="CTD" id="90835"/>
<dbReference type="RGD" id="1593368">
    <property type="gene designation" value="Cfap119"/>
</dbReference>
<dbReference type="VEuPathDB" id="HostDB:ENSRNOG00000053015"/>
<dbReference type="eggNOG" id="ENOG502RXPT">
    <property type="taxonomic scope" value="Eukaryota"/>
</dbReference>
<dbReference type="HOGENOM" id="CLU_073614_0_0_1"/>
<dbReference type="InParanoid" id="B0BMZ6"/>
<dbReference type="PhylomeDB" id="B0BMZ6"/>
<dbReference type="TreeFam" id="TF343725"/>
<dbReference type="PRO" id="PR:B0BMZ6"/>
<dbReference type="Proteomes" id="UP000002494">
    <property type="component" value="Chromosome 1"/>
</dbReference>
<dbReference type="Proteomes" id="UP000234681">
    <property type="component" value="Chromosome 1"/>
</dbReference>
<dbReference type="Bgee" id="ENSRNOG00000053015">
    <property type="expression patterns" value="Expressed in testis and 20 other cell types or tissues"/>
</dbReference>
<dbReference type="GO" id="GO:0001669">
    <property type="term" value="C:acrosomal vesicle"/>
    <property type="evidence" value="ECO:0000314"/>
    <property type="project" value="UniProtKB"/>
</dbReference>
<dbReference type="GO" id="GO:0005930">
    <property type="term" value="C:axoneme"/>
    <property type="evidence" value="ECO:0000266"/>
    <property type="project" value="RGD"/>
</dbReference>
<dbReference type="GO" id="GO:0005737">
    <property type="term" value="C:cytoplasm"/>
    <property type="evidence" value="ECO:0000314"/>
    <property type="project" value="UniProtKB"/>
</dbReference>
<dbReference type="GO" id="GO:0001534">
    <property type="term" value="C:radial spoke"/>
    <property type="evidence" value="ECO:0000266"/>
    <property type="project" value="RGD"/>
</dbReference>
<dbReference type="GO" id="GO:0097228">
    <property type="term" value="C:sperm principal piece"/>
    <property type="evidence" value="ECO:0000314"/>
    <property type="project" value="UniProtKB"/>
</dbReference>
<dbReference type="GO" id="GO:0010467">
    <property type="term" value="P:gene expression"/>
    <property type="evidence" value="ECO:0000266"/>
    <property type="project" value="RGD"/>
</dbReference>
<dbReference type="GO" id="GO:0007338">
    <property type="term" value="P:single fertilization"/>
    <property type="evidence" value="ECO:0000266"/>
    <property type="project" value="RGD"/>
</dbReference>
<dbReference type="GO" id="GO:0120316">
    <property type="term" value="P:sperm flagellum assembly"/>
    <property type="evidence" value="ECO:0000266"/>
    <property type="project" value="RGD"/>
</dbReference>
<dbReference type="InterPro" id="IPR032727">
    <property type="entry name" value="CLAMP"/>
</dbReference>
<dbReference type="PANTHER" id="PTHR28457:SF1">
    <property type="entry name" value="CILIA- AND FLAGELLA-ASSOCIATED PROTEIN 119"/>
    <property type="match status" value="1"/>
</dbReference>
<dbReference type="PANTHER" id="PTHR28457">
    <property type="entry name" value="COILED-COIL DOMAIN-CONTAINING PROTEIN 189"/>
    <property type="match status" value="1"/>
</dbReference>
<dbReference type="Pfam" id="PF14769">
    <property type="entry name" value="CLAMP"/>
    <property type="match status" value="1"/>
</dbReference>
<sequence length="332" mass="37860">MITPRSSQSLEMKVQTELEHSPKLQEEPDRSPSLVDSSVIRIGTDEQNESPAEATSSPVEVAEDPGANLFPPPLPQPRICMWKYLDIHSMHRLEKAATVEEMREVLAELLELGGPEQSLRDAIILDLFSHALIFCRQQGFSLEQTSAACALLQDLHKACVATPLGNVEECYRYFTSVLFCHGVRRPPFSIDLFKEEQLLALADYVVNTYFRHFKLYKYVFTPQVRLDLSLSYMGLQSLHLWPEEKEDEEATVEQAATPQEEEPEAVTEAEQQPSEVCILQTYIKCQLNKELRQLQQLVEERLKESEERLSNRLAALERPYQTPPSKGKSKAK</sequence>
<comment type="subcellular location">
    <subcellularLocation>
        <location evidence="4">Cell projection</location>
        <location evidence="4">Cilium</location>
        <location evidence="4">Flagellum</location>
    </subcellularLocation>
    <subcellularLocation>
        <location evidence="4">Cytoplasmic vesicle</location>
        <location evidence="4">Secretory vesicle</location>
        <location evidence="4">Acrosome</location>
    </subcellularLocation>
    <subcellularLocation>
        <location evidence="4">Cytoplasm</location>
    </subcellularLocation>
    <text evidence="3">In elongated spermatids, enriched in the principal piece of flagella where it is peri-axonemal (PubMed:15489334). Disappears from sperm heads upon acrosome reaction (PubMed:15489334).</text>
</comment>
<comment type="tissue specificity">
    <text evidence="4">Specifically expressed in testis (at protein level).</text>
</comment>
<comment type="developmental stage">
    <text evidence="4">Expression is detected at 3 weeks of postnatal development and persists up to adulthood (PubMed:27032685). Expressed in elongated spermatids but not detected in spermatogonia, spermatocytes, and round spermatids (PubMed:27032685).</text>
</comment>
<comment type="sequence caution" evidence="6">
    <conflict type="erroneous initiation">
        <sequence resource="EMBL-CDS" id="BAR94674"/>
    </conflict>
    <text>Extended N-terminus.</text>
</comment>
<gene>
    <name evidence="8" type="primary">Cfap119</name>
    <name evidence="8" type="synonym">Ccdc189</name>
</gene>
<name>CF119_RAT</name>
<reference key="1">
    <citation type="journal article" date="2016" name="Zool. Sci.">
        <title>Molecular Cloning of Spergen-4, Encoding a Spermatogenic Cell-Specific Protein Associated with Sperm Flagella and the Acrosome Region in Rat Spermatozoa.</title>
        <authorList>
            <person name="Howida A."/>
            <person name="Salaheldeen E."/>
            <person name="Iida H."/>
        </authorList>
    </citation>
    <scope>NUCLEOTIDE SEQUENCE [MRNA]</scope>
    <scope>SUBCELLULAR LOCATION</scope>
    <scope>TISSUE SPECIFICITY</scope>
    <scope>DEVELOPMENTAL STAGE</scope>
    <source>
        <strain>Wistar</strain>
        <tissue>Testis</tissue>
    </source>
</reference>
<reference key="2">
    <citation type="journal article" date="2004" name="Nature">
        <title>Genome sequence of the Brown Norway rat yields insights into mammalian evolution.</title>
        <authorList>
            <person name="Gibbs R.A."/>
            <person name="Weinstock G.M."/>
            <person name="Metzker M.L."/>
            <person name="Muzny D.M."/>
            <person name="Sodergren E.J."/>
            <person name="Scherer S."/>
            <person name="Scott G."/>
            <person name="Steffen D."/>
            <person name="Worley K.C."/>
            <person name="Burch P.E."/>
            <person name="Okwuonu G."/>
            <person name="Hines S."/>
            <person name="Lewis L."/>
            <person name="Deramo C."/>
            <person name="Delgado O."/>
            <person name="Dugan-Rocha S."/>
            <person name="Miner G."/>
            <person name="Morgan M."/>
            <person name="Hawes A."/>
            <person name="Gill R."/>
            <person name="Holt R.A."/>
            <person name="Adams M.D."/>
            <person name="Amanatides P.G."/>
            <person name="Baden-Tillson H."/>
            <person name="Barnstead M."/>
            <person name="Chin S."/>
            <person name="Evans C.A."/>
            <person name="Ferriera S."/>
            <person name="Fosler C."/>
            <person name="Glodek A."/>
            <person name="Gu Z."/>
            <person name="Jennings D."/>
            <person name="Kraft C.L."/>
            <person name="Nguyen T."/>
            <person name="Pfannkoch C.M."/>
            <person name="Sitter C."/>
            <person name="Sutton G.G."/>
            <person name="Venter J.C."/>
            <person name="Woodage T."/>
            <person name="Smith D."/>
            <person name="Lee H.-M."/>
            <person name="Gustafson E."/>
            <person name="Cahill P."/>
            <person name="Kana A."/>
            <person name="Doucette-Stamm L."/>
            <person name="Weinstock K."/>
            <person name="Fechtel K."/>
            <person name="Weiss R.B."/>
            <person name="Dunn D.M."/>
            <person name="Green E.D."/>
            <person name="Blakesley R.W."/>
            <person name="Bouffard G.G."/>
            <person name="De Jong P.J."/>
            <person name="Osoegawa K."/>
            <person name="Zhu B."/>
            <person name="Marra M."/>
            <person name="Schein J."/>
            <person name="Bosdet I."/>
            <person name="Fjell C."/>
            <person name="Jones S."/>
            <person name="Krzywinski M."/>
            <person name="Mathewson C."/>
            <person name="Siddiqui A."/>
            <person name="Wye N."/>
            <person name="McPherson J."/>
            <person name="Zhao S."/>
            <person name="Fraser C.M."/>
            <person name="Shetty J."/>
            <person name="Shatsman S."/>
            <person name="Geer K."/>
            <person name="Chen Y."/>
            <person name="Abramzon S."/>
            <person name="Nierman W.C."/>
            <person name="Havlak P.H."/>
            <person name="Chen R."/>
            <person name="Durbin K.J."/>
            <person name="Egan A."/>
            <person name="Ren Y."/>
            <person name="Song X.-Z."/>
            <person name="Li B."/>
            <person name="Liu Y."/>
            <person name="Qin X."/>
            <person name="Cawley S."/>
            <person name="Cooney A.J."/>
            <person name="D'Souza L.M."/>
            <person name="Martin K."/>
            <person name="Wu J.Q."/>
            <person name="Gonzalez-Garay M.L."/>
            <person name="Jackson A.R."/>
            <person name="Kalafus K.J."/>
            <person name="McLeod M.P."/>
            <person name="Milosavljevic A."/>
            <person name="Virk D."/>
            <person name="Volkov A."/>
            <person name="Wheeler D.A."/>
            <person name="Zhang Z."/>
            <person name="Bailey J.A."/>
            <person name="Eichler E.E."/>
            <person name="Tuzun E."/>
            <person name="Birney E."/>
            <person name="Mongin E."/>
            <person name="Ureta-Vidal A."/>
            <person name="Woodwark C."/>
            <person name="Zdobnov E."/>
            <person name="Bork P."/>
            <person name="Suyama M."/>
            <person name="Torrents D."/>
            <person name="Alexandersson M."/>
            <person name="Trask B.J."/>
            <person name="Young J.M."/>
            <person name="Huang H."/>
            <person name="Wang H."/>
            <person name="Xing H."/>
            <person name="Daniels S."/>
            <person name="Gietzen D."/>
            <person name="Schmidt J."/>
            <person name="Stevens K."/>
            <person name="Vitt U."/>
            <person name="Wingrove J."/>
            <person name="Camara F."/>
            <person name="Mar Alba M."/>
            <person name="Abril J.F."/>
            <person name="Guigo R."/>
            <person name="Smit A."/>
            <person name="Dubchak I."/>
            <person name="Rubin E.M."/>
            <person name="Couronne O."/>
            <person name="Poliakov A."/>
            <person name="Huebner N."/>
            <person name="Ganten D."/>
            <person name="Goesele C."/>
            <person name="Hummel O."/>
            <person name="Kreitler T."/>
            <person name="Lee Y.-A."/>
            <person name="Monti J."/>
            <person name="Schulz H."/>
            <person name="Zimdahl H."/>
            <person name="Himmelbauer H."/>
            <person name="Lehrach H."/>
            <person name="Jacob H.J."/>
            <person name="Bromberg S."/>
            <person name="Gullings-Handley J."/>
            <person name="Jensen-Seaman M.I."/>
            <person name="Kwitek A.E."/>
            <person name="Lazar J."/>
            <person name="Pasko D."/>
            <person name="Tonellato P.J."/>
            <person name="Twigger S."/>
            <person name="Ponting C.P."/>
            <person name="Duarte J.M."/>
            <person name="Rice S."/>
            <person name="Goodstadt L."/>
            <person name="Beatson S.A."/>
            <person name="Emes R.D."/>
            <person name="Winter E.E."/>
            <person name="Webber C."/>
            <person name="Brandt P."/>
            <person name="Nyakatura G."/>
            <person name="Adetobi M."/>
            <person name="Chiaromonte F."/>
            <person name="Elnitski L."/>
            <person name="Eswara P."/>
            <person name="Hardison R.C."/>
            <person name="Hou M."/>
            <person name="Kolbe D."/>
            <person name="Makova K."/>
            <person name="Miller W."/>
            <person name="Nekrutenko A."/>
            <person name="Riemer C."/>
            <person name="Schwartz S."/>
            <person name="Taylor J."/>
            <person name="Yang S."/>
            <person name="Zhang Y."/>
            <person name="Lindpaintner K."/>
            <person name="Andrews T.D."/>
            <person name="Caccamo M."/>
            <person name="Clamp M."/>
            <person name="Clarke L."/>
            <person name="Curwen V."/>
            <person name="Durbin R.M."/>
            <person name="Eyras E."/>
            <person name="Searle S.M."/>
            <person name="Cooper G.M."/>
            <person name="Batzoglou S."/>
            <person name="Brudno M."/>
            <person name="Sidow A."/>
            <person name="Stone E.A."/>
            <person name="Payseur B.A."/>
            <person name="Bourque G."/>
            <person name="Lopez-Otin C."/>
            <person name="Puente X.S."/>
            <person name="Chakrabarti K."/>
            <person name="Chatterji S."/>
            <person name="Dewey C."/>
            <person name="Pachter L."/>
            <person name="Bray N."/>
            <person name="Yap V.B."/>
            <person name="Caspi A."/>
            <person name="Tesler G."/>
            <person name="Pevzner P.A."/>
            <person name="Haussler D."/>
            <person name="Roskin K.M."/>
            <person name="Baertsch R."/>
            <person name="Clawson H."/>
            <person name="Furey T.S."/>
            <person name="Hinrichs A.S."/>
            <person name="Karolchik D."/>
            <person name="Kent W.J."/>
            <person name="Rosenbloom K.R."/>
            <person name="Trumbower H."/>
            <person name="Weirauch M."/>
            <person name="Cooper D.N."/>
            <person name="Stenson P.D."/>
            <person name="Ma B."/>
            <person name="Brent M."/>
            <person name="Arumugam M."/>
            <person name="Shteynberg D."/>
            <person name="Copley R.R."/>
            <person name="Taylor M.S."/>
            <person name="Riethman H."/>
            <person name="Mudunuri U."/>
            <person name="Peterson J."/>
            <person name="Guyer M."/>
            <person name="Felsenfeld A."/>
            <person name="Old S."/>
            <person name="Mockrin S."/>
            <person name="Collins F.S."/>
        </authorList>
    </citation>
    <scope>NUCLEOTIDE SEQUENCE [LARGE SCALE GENOMIC DNA]</scope>
    <source>
        <strain>Brown Norway</strain>
    </source>
</reference>
<reference key="3">
    <citation type="submission" date="2005-09" db="EMBL/GenBank/DDBJ databases">
        <authorList>
            <person name="Mural R.J."/>
            <person name="Adams M.D."/>
            <person name="Myers E.W."/>
            <person name="Smith H.O."/>
            <person name="Venter J.C."/>
        </authorList>
    </citation>
    <scope>NUCLEOTIDE SEQUENCE [LARGE SCALE GENOMIC DNA]</scope>
</reference>
<reference key="4">
    <citation type="journal article" date="2004" name="Genome Res.">
        <title>The status, quality, and expansion of the NIH full-length cDNA project: the Mammalian Gene Collection (MGC).</title>
        <authorList>
            <consortium name="The MGC Project Team"/>
        </authorList>
    </citation>
    <scope>NUCLEOTIDE SEQUENCE [LARGE SCALE MRNA]</scope>
    <source>
        <tissue>Testis</tissue>
    </source>
</reference>